<protein>
    <recommendedName>
        <fullName>Uncharacterized N-acetyltransferase p20</fullName>
        <ecNumber>2.3.1.-</ecNumber>
    </recommendedName>
</protein>
<keyword id="KW-0012">Acyltransferase</keyword>
<keyword id="KW-0808">Transferase</keyword>
<evidence type="ECO:0000255" key="1">
    <source>
        <dbReference type="PROSITE-ProRule" id="PRU00532"/>
    </source>
</evidence>
<accession>P05332</accession>
<gene>
    <name type="primary">p20</name>
</gene>
<proteinExistence type="predicted"/>
<sequence length="178" mass="20469">METLYTERLTLRKMELEDADVLCQYWSDPEVTKYMNITPFTDVSQARDMIQMINDLSLEGQANRFSIIVKETDEVIGTCGFNMIDQENGRAEIGYDLGRNHWGKGFASEAVQKLIDYGFTSLNLNRIEAKVEPENTPSIKLLNSLSFQKEGLLRDYEKAKGRLIDVYMFSLLKREYAG</sequence>
<organism>
    <name type="scientific">Bacillus licheniformis</name>
    <dbReference type="NCBI Taxonomy" id="1402"/>
    <lineage>
        <taxon>Bacteria</taxon>
        <taxon>Bacillati</taxon>
        <taxon>Bacillota</taxon>
        <taxon>Bacilli</taxon>
        <taxon>Bacillales</taxon>
        <taxon>Bacillaceae</taxon>
        <taxon>Bacillus</taxon>
    </lineage>
</organism>
<dbReference type="EC" id="2.3.1.-"/>
<dbReference type="EMBL" id="X07542">
    <property type="protein sequence ID" value="CAA30415.1"/>
    <property type="molecule type" value="Genomic_DNA"/>
</dbReference>
<dbReference type="PIR" id="S00875">
    <property type="entry name" value="S00875"/>
</dbReference>
<dbReference type="SMR" id="P05332"/>
<dbReference type="PATRIC" id="fig|1402.64.peg.4009"/>
<dbReference type="GO" id="GO:0005737">
    <property type="term" value="C:cytoplasm"/>
    <property type="evidence" value="ECO:0007669"/>
    <property type="project" value="TreeGrafter"/>
</dbReference>
<dbReference type="GO" id="GO:0008999">
    <property type="term" value="F:protein-N-terminal-alanine acetyltransferase activity"/>
    <property type="evidence" value="ECO:0007669"/>
    <property type="project" value="TreeGrafter"/>
</dbReference>
<dbReference type="CDD" id="cd04301">
    <property type="entry name" value="NAT_SF"/>
    <property type="match status" value="1"/>
</dbReference>
<dbReference type="Gene3D" id="3.40.630.30">
    <property type="match status" value="1"/>
</dbReference>
<dbReference type="InterPro" id="IPR016181">
    <property type="entry name" value="Acyl_CoA_acyltransferase"/>
</dbReference>
<dbReference type="InterPro" id="IPR000182">
    <property type="entry name" value="GNAT_dom"/>
</dbReference>
<dbReference type="InterPro" id="IPR051531">
    <property type="entry name" value="N-acetyltransferase"/>
</dbReference>
<dbReference type="PANTHER" id="PTHR43792">
    <property type="entry name" value="GNAT FAMILY, PUTATIVE (AFU_ORTHOLOGUE AFUA_3G00765)-RELATED-RELATED"/>
    <property type="match status" value="1"/>
</dbReference>
<dbReference type="PANTHER" id="PTHR43792:SF9">
    <property type="entry name" value="RIBOSOMAL-PROTEIN-ALANINE ACETYLTRANSFERASE"/>
    <property type="match status" value="1"/>
</dbReference>
<dbReference type="Pfam" id="PF13302">
    <property type="entry name" value="Acetyltransf_3"/>
    <property type="match status" value="1"/>
</dbReference>
<dbReference type="SUPFAM" id="SSF55729">
    <property type="entry name" value="Acyl-CoA N-acyltransferases (Nat)"/>
    <property type="match status" value="1"/>
</dbReference>
<dbReference type="PROSITE" id="PS51186">
    <property type="entry name" value="GNAT"/>
    <property type="match status" value="1"/>
</dbReference>
<feature type="chain" id="PRO_0000066384" description="Uncharacterized N-acetyltransferase p20">
    <location>
        <begin position="1"/>
        <end position="178"/>
    </location>
</feature>
<feature type="domain" description="N-acetyltransferase" evidence="1">
    <location>
        <begin position="9"/>
        <end position="173"/>
    </location>
</feature>
<name>YP20_BACLI</name>
<reference key="1">
    <citation type="journal article" date="1988" name="Nucleic Acids Res.">
        <title>A hypothetical protein (P20), homologous to Tn3 repressor is encoded downstream from the bla regulatory region in Bacillus licheniformis 749.</title>
        <authorList>
            <person name="Zhu Y.F."/>
            <person name="Kobayashi T."/>
            <person name="Lampen O.J."/>
        </authorList>
    </citation>
    <scope>NUCLEOTIDE SEQUENCE [GENOMIC DNA]</scope>
    <source>
        <strain>749</strain>
    </source>
</reference>